<proteinExistence type="inferred from homology"/>
<name>HEM3_COXBR</name>
<evidence type="ECO:0000255" key="1">
    <source>
        <dbReference type="HAMAP-Rule" id="MF_00260"/>
    </source>
</evidence>
<comment type="function">
    <text evidence="1">Tetrapolymerization of the monopyrrole PBG into the hydroxymethylbilane pre-uroporphyrinogen in several discrete steps.</text>
</comment>
<comment type="catalytic activity">
    <reaction evidence="1">
        <text>4 porphobilinogen + H2O = hydroxymethylbilane + 4 NH4(+)</text>
        <dbReference type="Rhea" id="RHEA:13185"/>
        <dbReference type="ChEBI" id="CHEBI:15377"/>
        <dbReference type="ChEBI" id="CHEBI:28938"/>
        <dbReference type="ChEBI" id="CHEBI:57845"/>
        <dbReference type="ChEBI" id="CHEBI:58126"/>
        <dbReference type="EC" id="2.5.1.61"/>
    </reaction>
</comment>
<comment type="cofactor">
    <cofactor evidence="1">
        <name>dipyrromethane</name>
        <dbReference type="ChEBI" id="CHEBI:60342"/>
    </cofactor>
    <text evidence="1">Binds 1 dipyrromethane group covalently.</text>
</comment>
<comment type="pathway">
    <text evidence="1">Porphyrin-containing compound metabolism; protoporphyrin-IX biosynthesis; coproporphyrinogen-III from 5-aminolevulinate: step 2/4.</text>
</comment>
<comment type="subunit">
    <text evidence="1">Monomer.</text>
</comment>
<comment type="miscellaneous">
    <text evidence="1">The porphobilinogen subunits are added to the dipyrromethane group.</text>
</comment>
<comment type="similarity">
    <text evidence="1">Belongs to the HMBS family.</text>
</comment>
<accession>A9N910</accession>
<protein>
    <recommendedName>
        <fullName evidence="1">Porphobilinogen deaminase</fullName>
        <shortName evidence="1">PBG</shortName>
        <ecNumber evidence="1">2.5.1.61</ecNumber>
    </recommendedName>
    <alternativeName>
        <fullName evidence="1">Hydroxymethylbilane synthase</fullName>
        <shortName evidence="1">HMBS</shortName>
    </alternativeName>
    <alternativeName>
        <fullName evidence="1">Pre-uroporphyrinogen synthase</fullName>
    </alternativeName>
</protein>
<feature type="chain" id="PRO_1000078607" description="Porphobilinogen deaminase">
    <location>
        <begin position="1"/>
        <end position="307"/>
    </location>
</feature>
<feature type="modified residue" description="S-(dipyrrolylmethanemethyl)cysteine" evidence="1">
    <location>
        <position position="241"/>
    </location>
</feature>
<reference key="1">
    <citation type="submission" date="2007-11" db="EMBL/GenBank/DDBJ databases">
        <title>Genome sequencing of phylogenetically and phenotypically diverse Coxiella burnetii isolates.</title>
        <authorList>
            <person name="Seshadri R."/>
            <person name="Samuel J.E."/>
        </authorList>
    </citation>
    <scope>NUCLEOTIDE SEQUENCE [LARGE SCALE GENOMIC DNA]</scope>
    <source>
        <strain>RSA 331 / Henzerling II</strain>
    </source>
</reference>
<gene>
    <name evidence="1" type="primary">hemC</name>
    <name type="ordered locus">COXBURSA331_A0011</name>
</gene>
<dbReference type="EC" id="2.5.1.61" evidence="1"/>
<dbReference type="EMBL" id="CP000890">
    <property type="protein sequence ID" value="ABX78619.1"/>
    <property type="molecule type" value="Genomic_DNA"/>
</dbReference>
<dbReference type="RefSeq" id="WP_012220008.1">
    <property type="nucleotide sequence ID" value="NC_010117.1"/>
</dbReference>
<dbReference type="SMR" id="A9N910"/>
<dbReference type="KEGG" id="cbs:COXBURSA331_A0011"/>
<dbReference type="HOGENOM" id="CLU_019704_1_0_6"/>
<dbReference type="UniPathway" id="UPA00251">
    <property type="reaction ID" value="UER00319"/>
</dbReference>
<dbReference type="GO" id="GO:0005737">
    <property type="term" value="C:cytoplasm"/>
    <property type="evidence" value="ECO:0007669"/>
    <property type="project" value="TreeGrafter"/>
</dbReference>
<dbReference type="GO" id="GO:0004418">
    <property type="term" value="F:hydroxymethylbilane synthase activity"/>
    <property type="evidence" value="ECO:0007669"/>
    <property type="project" value="UniProtKB-UniRule"/>
</dbReference>
<dbReference type="GO" id="GO:0006782">
    <property type="term" value="P:protoporphyrinogen IX biosynthetic process"/>
    <property type="evidence" value="ECO:0007669"/>
    <property type="project" value="UniProtKB-UniRule"/>
</dbReference>
<dbReference type="FunFam" id="3.40.190.10:FF:000005">
    <property type="entry name" value="Porphobilinogen deaminase"/>
    <property type="match status" value="1"/>
</dbReference>
<dbReference type="FunFam" id="3.40.190.10:FF:000086">
    <property type="entry name" value="Probable porphobilinogen deaminase"/>
    <property type="match status" value="1"/>
</dbReference>
<dbReference type="Gene3D" id="3.40.190.10">
    <property type="entry name" value="Periplasmic binding protein-like II"/>
    <property type="match status" value="2"/>
</dbReference>
<dbReference type="Gene3D" id="3.30.160.40">
    <property type="entry name" value="Porphobilinogen deaminase, C-terminal domain"/>
    <property type="match status" value="1"/>
</dbReference>
<dbReference type="HAMAP" id="MF_00260">
    <property type="entry name" value="Porphobil_deam"/>
    <property type="match status" value="1"/>
</dbReference>
<dbReference type="InterPro" id="IPR000860">
    <property type="entry name" value="HemC"/>
</dbReference>
<dbReference type="InterPro" id="IPR022419">
    <property type="entry name" value="Porphobilin_deaminase_cofac_BS"/>
</dbReference>
<dbReference type="InterPro" id="IPR022417">
    <property type="entry name" value="Porphobilin_deaminase_N"/>
</dbReference>
<dbReference type="InterPro" id="IPR022418">
    <property type="entry name" value="Porphobilinogen_deaminase_C"/>
</dbReference>
<dbReference type="InterPro" id="IPR036803">
    <property type="entry name" value="Porphobilinogen_deaminase_C_sf"/>
</dbReference>
<dbReference type="NCBIfam" id="TIGR00212">
    <property type="entry name" value="hemC"/>
    <property type="match status" value="1"/>
</dbReference>
<dbReference type="PANTHER" id="PTHR11557">
    <property type="entry name" value="PORPHOBILINOGEN DEAMINASE"/>
    <property type="match status" value="1"/>
</dbReference>
<dbReference type="PANTHER" id="PTHR11557:SF0">
    <property type="entry name" value="PORPHOBILINOGEN DEAMINASE"/>
    <property type="match status" value="1"/>
</dbReference>
<dbReference type="Pfam" id="PF01379">
    <property type="entry name" value="Porphobil_deam"/>
    <property type="match status" value="1"/>
</dbReference>
<dbReference type="Pfam" id="PF03900">
    <property type="entry name" value="Porphobil_deamC"/>
    <property type="match status" value="1"/>
</dbReference>
<dbReference type="PIRSF" id="PIRSF001438">
    <property type="entry name" value="4pyrrol_synth_OHMeBilane_synth"/>
    <property type="match status" value="1"/>
</dbReference>
<dbReference type="PRINTS" id="PR00151">
    <property type="entry name" value="PORPHBDMNASE"/>
</dbReference>
<dbReference type="SUPFAM" id="SSF53850">
    <property type="entry name" value="Periplasmic binding protein-like II"/>
    <property type="match status" value="1"/>
</dbReference>
<dbReference type="SUPFAM" id="SSF54782">
    <property type="entry name" value="Porphobilinogen deaminase (hydroxymethylbilane synthase), C-terminal domain"/>
    <property type="match status" value="1"/>
</dbReference>
<dbReference type="PROSITE" id="PS00533">
    <property type="entry name" value="PORPHOBILINOGEN_DEAM"/>
    <property type="match status" value="1"/>
</dbReference>
<organism>
    <name type="scientific">Coxiella burnetii (strain RSA 331 / Henzerling II)</name>
    <dbReference type="NCBI Taxonomy" id="360115"/>
    <lineage>
        <taxon>Bacteria</taxon>
        <taxon>Pseudomonadati</taxon>
        <taxon>Pseudomonadota</taxon>
        <taxon>Gammaproteobacteria</taxon>
        <taxon>Legionellales</taxon>
        <taxon>Coxiellaceae</taxon>
        <taxon>Coxiella</taxon>
    </lineage>
</organism>
<sequence>MIKKRSILIVTRKSPLALWQAEFVKQQIENSHPHLACQILGCTTQGDRLTTEKLVDSGGKDLFVKDLQKALLNRDADIAVHSIKDMSACDGPELMVGAFIRREDPRDVLIVKGELSTLPPHAVIGTSSPRRQCQLKKFQPGCKIKEIRGNVGTRLAKLDAGHYEAIVLAAAGLKRLGLENRIHYYFDPHEFIPAIGQGAIGVECRSDDHEMQTLLKSLDHRETRLCVTAERAVNEKLGGDCFTPIAAHAIIKNDQFSLFAMLGKIDGRVIIRATEIGNSEEAKRIGFKVASQLLEQGGDSLLRELKQ</sequence>
<keyword id="KW-0627">Porphyrin biosynthesis</keyword>
<keyword id="KW-0808">Transferase</keyword>